<sequence>MRLIPLKDTAQVGKWAARHIVQRINAFKPTAERPFVLGLPTGGTPLEAYKHLIAMHKAGEVSFKHVVTFNMDEYVGLPQEHPESYHTFMYRNFFDHVDIPSENINLLNGNAPDVDAECRQYEAKIKSYGKINLFMGGVGIDGHIAFNEPASSLASRTRIKTLTEDTRIANSRFFGGDVSLVPKFALTVGVGTLLDAEEVMILVTGHAKAQALEAAVEGNINHMWTISCLQLHAKAVVVCDEPSTMELKVKTVKYFRELEAESVKSL</sequence>
<name>NAGB_SERP5</name>
<protein>
    <recommendedName>
        <fullName evidence="1">Glucosamine-6-phosphate deaminase</fullName>
        <ecNumber evidence="1">3.5.99.6</ecNumber>
    </recommendedName>
    <alternativeName>
        <fullName evidence="1">GlcN6P deaminase</fullName>
        <shortName evidence="1">GNPDA</shortName>
    </alternativeName>
    <alternativeName>
        <fullName evidence="1">Glucosamine-6-phosphate isomerase</fullName>
    </alternativeName>
</protein>
<feature type="chain" id="PRO_1000067016" description="Glucosamine-6-phosphate deaminase">
    <location>
        <begin position="1"/>
        <end position="266"/>
    </location>
</feature>
<feature type="active site" description="Proton acceptor; for enolization step" evidence="1">
    <location>
        <position position="72"/>
    </location>
</feature>
<feature type="active site" description="For ring-opening step" evidence="1">
    <location>
        <position position="141"/>
    </location>
</feature>
<feature type="active site" description="Proton acceptor; for ring-opening step" evidence="1">
    <location>
        <position position="143"/>
    </location>
</feature>
<feature type="active site" description="For ring-opening step" evidence="1">
    <location>
        <position position="148"/>
    </location>
</feature>
<feature type="site" description="Part of the allosteric site" evidence="1">
    <location>
        <position position="151"/>
    </location>
</feature>
<feature type="site" description="Part of the allosteric site" evidence="1">
    <location>
        <position position="158"/>
    </location>
</feature>
<feature type="site" description="Part of the allosteric site" evidence="1">
    <location>
        <position position="160"/>
    </location>
</feature>
<feature type="site" description="Part of the allosteric site" evidence="1">
    <location>
        <position position="161"/>
    </location>
</feature>
<feature type="site" description="Part of the allosteric site" evidence="1">
    <location>
        <position position="254"/>
    </location>
</feature>
<dbReference type="EC" id="3.5.99.6" evidence="1"/>
<dbReference type="EMBL" id="CP000826">
    <property type="protein sequence ID" value="ABV40331.1"/>
    <property type="molecule type" value="Genomic_DNA"/>
</dbReference>
<dbReference type="SMR" id="A8GB41"/>
<dbReference type="STRING" id="399741.Spro_1227"/>
<dbReference type="KEGG" id="spe:Spro_1227"/>
<dbReference type="eggNOG" id="COG0363">
    <property type="taxonomic scope" value="Bacteria"/>
</dbReference>
<dbReference type="HOGENOM" id="CLU_049611_0_1_6"/>
<dbReference type="OrthoDB" id="9791139at2"/>
<dbReference type="UniPathway" id="UPA00629">
    <property type="reaction ID" value="UER00684"/>
</dbReference>
<dbReference type="GO" id="GO:0005737">
    <property type="term" value="C:cytoplasm"/>
    <property type="evidence" value="ECO:0007669"/>
    <property type="project" value="TreeGrafter"/>
</dbReference>
<dbReference type="GO" id="GO:0004342">
    <property type="term" value="F:glucosamine-6-phosphate deaminase activity"/>
    <property type="evidence" value="ECO:0007669"/>
    <property type="project" value="UniProtKB-UniRule"/>
</dbReference>
<dbReference type="GO" id="GO:0042802">
    <property type="term" value="F:identical protein binding"/>
    <property type="evidence" value="ECO:0007669"/>
    <property type="project" value="TreeGrafter"/>
</dbReference>
<dbReference type="GO" id="GO:0005975">
    <property type="term" value="P:carbohydrate metabolic process"/>
    <property type="evidence" value="ECO:0007669"/>
    <property type="project" value="InterPro"/>
</dbReference>
<dbReference type="GO" id="GO:0006043">
    <property type="term" value="P:glucosamine catabolic process"/>
    <property type="evidence" value="ECO:0007669"/>
    <property type="project" value="TreeGrafter"/>
</dbReference>
<dbReference type="GO" id="GO:0006046">
    <property type="term" value="P:N-acetylglucosamine catabolic process"/>
    <property type="evidence" value="ECO:0007669"/>
    <property type="project" value="TreeGrafter"/>
</dbReference>
<dbReference type="GO" id="GO:0019262">
    <property type="term" value="P:N-acetylneuraminate catabolic process"/>
    <property type="evidence" value="ECO:0007669"/>
    <property type="project" value="UniProtKB-UniRule"/>
</dbReference>
<dbReference type="CDD" id="cd01399">
    <property type="entry name" value="GlcN6P_deaminase"/>
    <property type="match status" value="1"/>
</dbReference>
<dbReference type="FunFam" id="3.40.50.1360:FF:000002">
    <property type="entry name" value="Glucosamine-6-phosphate deaminase"/>
    <property type="match status" value="1"/>
</dbReference>
<dbReference type="Gene3D" id="3.40.50.1360">
    <property type="match status" value="1"/>
</dbReference>
<dbReference type="HAMAP" id="MF_01241">
    <property type="entry name" value="GlcN6P_deamin"/>
    <property type="match status" value="1"/>
</dbReference>
<dbReference type="InterPro" id="IPR006148">
    <property type="entry name" value="Glc/Gal-6P_isomerase"/>
</dbReference>
<dbReference type="InterPro" id="IPR004547">
    <property type="entry name" value="Glucosamine6P_isomerase"/>
</dbReference>
<dbReference type="InterPro" id="IPR018321">
    <property type="entry name" value="Glucosamine6P_isomerase_CS"/>
</dbReference>
<dbReference type="InterPro" id="IPR037171">
    <property type="entry name" value="NagB/RpiA_transferase-like"/>
</dbReference>
<dbReference type="NCBIfam" id="TIGR00502">
    <property type="entry name" value="nagB"/>
    <property type="match status" value="1"/>
</dbReference>
<dbReference type="NCBIfam" id="NF001685">
    <property type="entry name" value="PRK00443.1-5"/>
    <property type="match status" value="1"/>
</dbReference>
<dbReference type="PANTHER" id="PTHR11280">
    <property type="entry name" value="GLUCOSAMINE-6-PHOSPHATE ISOMERASE"/>
    <property type="match status" value="1"/>
</dbReference>
<dbReference type="PANTHER" id="PTHR11280:SF5">
    <property type="entry name" value="GLUCOSAMINE-6-PHOSPHATE ISOMERASE"/>
    <property type="match status" value="1"/>
</dbReference>
<dbReference type="Pfam" id="PF01182">
    <property type="entry name" value="Glucosamine_iso"/>
    <property type="match status" value="1"/>
</dbReference>
<dbReference type="SUPFAM" id="SSF100950">
    <property type="entry name" value="NagB/RpiA/CoA transferase-like"/>
    <property type="match status" value="1"/>
</dbReference>
<dbReference type="PROSITE" id="PS01161">
    <property type="entry name" value="GLC_GALNAC_ISOMERASE"/>
    <property type="match status" value="1"/>
</dbReference>
<organism>
    <name type="scientific">Serratia proteamaculans (strain 568)</name>
    <dbReference type="NCBI Taxonomy" id="399741"/>
    <lineage>
        <taxon>Bacteria</taxon>
        <taxon>Pseudomonadati</taxon>
        <taxon>Pseudomonadota</taxon>
        <taxon>Gammaproteobacteria</taxon>
        <taxon>Enterobacterales</taxon>
        <taxon>Yersiniaceae</taxon>
        <taxon>Serratia</taxon>
    </lineage>
</organism>
<accession>A8GB41</accession>
<evidence type="ECO:0000255" key="1">
    <source>
        <dbReference type="HAMAP-Rule" id="MF_01241"/>
    </source>
</evidence>
<proteinExistence type="inferred from homology"/>
<comment type="function">
    <text evidence="1">Catalyzes the reversible isomerization-deamination of glucosamine 6-phosphate (GlcN6P) to form fructose 6-phosphate (Fru6P) and ammonium ion.</text>
</comment>
<comment type="catalytic activity">
    <reaction evidence="1">
        <text>alpha-D-glucosamine 6-phosphate + H2O = beta-D-fructose 6-phosphate + NH4(+)</text>
        <dbReference type="Rhea" id="RHEA:12172"/>
        <dbReference type="ChEBI" id="CHEBI:15377"/>
        <dbReference type="ChEBI" id="CHEBI:28938"/>
        <dbReference type="ChEBI" id="CHEBI:57634"/>
        <dbReference type="ChEBI" id="CHEBI:75989"/>
        <dbReference type="EC" id="3.5.99.6"/>
    </reaction>
</comment>
<comment type="activity regulation">
    <text evidence="1">Allosterically activated by N-acetylglucosamine 6-phosphate (GlcNAc6P).</text>
</comment>
<comment type="pathway">
    <text evidence="1">Amino-sugar metabolism; N-acetylneuraminate degradation; D-fructose 6-phosphate from N-acetylneuraminate: step 5/5.</text>
</comment>
<comment type="subunit">
    <text evidence="1">Homohexamer.</text>
</comment>
<comment type="similarity">
    <text evidence="1">Belongs to the glucosamine/galactosamine-6-phosphate isomerase family. NagB subfamily.</text>
</comment>
<reference key="1">
    <citation type="submission" date="2007-09" db="EMBL/GenBank/DDBJ databases">
        <title>Complete sequence of chromosome of Serratia proteamaculans 568.</title>
        <authorList>
            <consortium name="US DOE Joint Genome Institute"/>
            <person name="Copeland A."/>
            <person name="Lucas S."/>
            <person name="Lapidus A."/>
            <person name="Barry K."/>
            <person name="Glavina del Rio T."/>
            <person name="Dalin E."/>
            <person name="Tice H."/>
            <person name="Pitluck S."/>
            <person name="Chain P."/>
            <person name="Malfatti S."/>
            <person name="Shin M."/>
            <person name="Vergez L."/>
            <person name="Schmutz J."/>
            <person name="Larimer F."/>
            <person name="Land M."/>
            <person name="Hauser L."/>
            <person name="Kyrpides N."/>
            <person name="Kim E."/>
            <person name="Taghavi S."/>
            <person name="Newman L."/>
            <person name="Vangronsveld J."/>
            <person name="van der Lelie D."/>
            <person name="Richardson P."/>
        </authorList>
    </citation>
    <scope>NUCLEOTIDE SEQUENCE [LARGE SCALE GENOMIC DNA]</scope>
    <source>
        <strain>568</strain>
    </source>
</reference>
<gene>
    <name evidence="1" type="primary">nagB</name>
    <name type="ordered locus">Spro_1227</name>
</gene>
<keyword id="KW-0021">Allosteric enzyme</keyword>
<keyword id="KW-0119">Carbohydrate metabolism</keyword>
<keyword id="KW-0378">Hydrolase</keyword>